<evidence type="ECO:0000250" key="1"/>
<evidence type="ECO:0000250" key="2">
    <source>
        <dbReference type="UniProtKB" id="Q06338"/>
    </source>
</evidence>
<evidence type="ECO:0000256" key="3">
    <source>
        <dbReference type="SAM" id="MobiDB-lite"/>
    </source>
</evidence>
<evidence type="ECO:0000305" key="4"/>
<organism>
    <name type="scientific">Neurospora crassa (strain ATCC 24698 / 74-OR23-1A / CBS 708.71 / DSM 1257 / FGSC 987)</name>
    <dbReference type="NCBI Taxonomy" id="367110"/>
    <lineage>
        <taxon>Eukaryota</taxon>
        <taxon>Fungi</taxon>
        <taxon>Dikarya</taxon>
        <taxon>Ascomycota</taxon>
        <taxon>Pezizomycotina</taxon>
        <taxon>Sordariomycetes</taxon>
        <taxon>Sordariomycetidae</taxon>
        <taxon>Sordariales</taxon>
        <taxon>Sordariaceae</taxon>
        <taxon>Neurospora</taxon>
    </lineage>
</organism>
<dbReference type="EMBL" id="CM002239">
    <property type="protein sequence ID" value="EAA32740.1"/>
    <property type="molecule type" value="Genomic_DNA"/>
</dbReference>
<dbReference type="RefSeq" id="XP_961976.1">
    <property type="nucleotide sequence ID" value="XM_956883.2"/>
</dbReference>
<dbReference type="SMR" id="Q7S8R3"/>
<dbReference type="FunCoup" id="Q7S8R3">
    <property type="interactions" value="944"/>
</dbReference>
<dbReference type="STRING" id="367110.Q7S8R3"/>
<dbReference type="PaxDb" id="5141-EFNCRP00000008056"/>
<dbReference type="EnsemblFungi" id="EAA32740">
    <property type="protein sequence ID" value="EAA32740"/>
    <property type="gene ID" value="NCU07726"/>
</dbReference>
<dbReference type="GeneID" id="3878124"/>
<dbReference type="KEGG" id="ncr:NCU07726"/>
<dbReference type="VEuPathDB" id="FungiDB:NCU07726"/>
<dbReference type="HOGENOM" id="CLU_068770_2_0_1"/>
<dbReference type="InParanoid" id="Q7S8R3"/>
<dbReference type="OMA" id="VKFYRKE"/>
<dbReference type="OrthoDB" id="27543at2759"/>
<dbReference type="Proteomes" id="UP000001805">
    <property type="component" value="Chromosome 4, Linkage Group IV"/>
</dbReference>
<dbReference type="GO" id="GO:0005737">
    <property type="term" value="C:cytoplasm"/>
    <property type="evidence" value="ECO:0007669"/>
    <property type="project" value="UniProtKB-SubCell"/>
</dbReference>
<dbReference type="GO" id="GO:0005634">
    <property type="term" value="C:nucleus"/>
    <property type="evidence" value="ECO:0000318"/>
    <property type="project" value="GO_Central"/>
</dbReference>
<dbReference type="GO" id="GO:0015031">
    <property type="term" value="P:protein transport"/>
    <property type="evidence" value="ECO:0007669"/>
    <property type="project" value="UniProtKB-KW"/>
</dbReference>
<dbReference type="InterPro" id="IPR025602">
    <property type="entry name" value="BCP1_family"/>
</dbReference>
<dbReference type="PANTHER" id="PTHR13261">
    <property type="entry name" value="BRCA2 AND CDKN1A INTERACTING PROTEIN"/>
    <property type="match status" value="1"/>
</dbReference>
<dbReference type="PANTHER" id="PTHR13261:SF0">
    <property type="entry name" value="BRCA2 AND CDKN1A-INTERACTING PROTEIN"/>
    <property type="match status" value="1"/>
</dbReference>
<dbReference type="Pfam" id="PF13862">
    <property type="entry name" value="BCCIP"/>
    <property type="match status" value="1"/>
</dbReference>
<dbReference type="PIRSF" id="PIRSF028983">
    <property type="entry name" value="BCP1"/>
    <property type="match status" value="1"/>
</dbReference>
<accession>Q7S8R3</accession>
<sequence>MGKKRSREEAQKEVVQNDPTVDKMDEDSDSSDSDEDMDIINVDFELFNYDKDIDFHGVKTLLRQLFDADAQLFDLSGLSDMIIEQNTIGSTCKVDDKANDAYAFLTVLNAWEHREKKPVAQLIEYLSDKAVKAGDSSLSVLPELFTSGKAQVGIVLSERLINMPAEVIPPMWNMMIEEIQDAVDDKEPYEFTHYLVVSRAYVEVESSLDQEEQKRKRLRDEKGLQYFHPEDEEMRKHAVGAGTYTFTKEGDSADSKRAFQELGVKSQGFMMLIEAGRFKQAVKAIGDCIGAAN</sequence>
<reference key="1">
    <citation type="journal article" date="2003" name="Nature">
        <title>The genome sequence of the filamentous fungus Neurospora crassa.</title>
        <authorList>
            <person name="Galagan J.E."/>
            <person name="Calvo S.E."/>
            <person name="Borkovich K.A."/>
            <person name="Selker E.U."/>
            <person name="Read N.D."/>
            <person name="Jaffe D.B."/>
            <person name="FitzHugh W."/>
            <person name="Ma L.-J."/>
            <person name="Smirnov S."/>
            <person name="Purcell S."/>
            <person name="Rehman B."/>
            <person name="Elkins T."/>
            <person name="Engels R."/>
            <person name="Wang S."/>
            <person name="Nielsen C.B."/>
            <person name="Butler J."/>
            <person name="Endrizzi M."/>
            <person name="Qui D."/>
            <person name="Ianakiev P."/>
            <person name="Bell-Pedersen D."/>
            <person name="Nelson M.A."/>
            <person name="Werner-Washburne M."/>
            <person name="Selitrennikoff C.P."/>
            <person name="Kinsey J.A."/>
            <person name="Braun E.L."/>
            <person name="Zelter A."/>
            <person name="Schulte U."/>
            <person name="Kothe G.O."/>
            <person name="Jedd G."/>
            <person name="Mewes H.-W."/>
            <person name="Staben C."/>
            <person name="Marcotte E."/>
            <person name="Greenberg D."/>
            <person name="Roy A."/>
            <person name="Foley K."/>
            <person name="Naylor J."/>
            <person name="Stange-Thomann N."/>
            <person name="Barrett R."/>
            <person name="Gnerre S."/>
            <person name="Kamal M."/>
            <person name="Kamvysselis M."/>
            <person name="Mauceli E.W."/>
            <person name="Bielke C."/>
            <person name="Rudd S."/>
            <person name="Frishman D."/>
            <person name="Krystofova S."/>
            <person name="Rasmussen C."/>
            <person name="Metzenberg R.L."/>
            <person name="Perkins D.D."/>
            <person name="Kroken S."/>
            <person name="Cogoni C."/>
            <person name="Macino G."/>
            <person name="Catcheside D.E.A."/>
            <person name="Li W."/>
            <person name="Pratt R.J."/>
            <person name="Osmani S.A."/>
            <person name="DeSouza C.P.C."/>
            <person name="Glass N.L."/>
            <person name="Orbach M.J."/>
            <person name="Berglund J.A."/>
            <person name="Voelker R."/>
            <person name="Yarden O."/>
            <person name="Plamann M."/>
            <person name="Seiler S."/>
            <person name="Dunlap J.C."/>
            <person name="Radford A."/>
            <person name="Aramayo R."/>
            <person name="Natvig D.O."/>
            <person name="Alex L.A."/>
            <person name="Mannhaupt G."/>
            <person name="Ebbole D.J."/>
            <person name="Freitag M."/>
            <person name="Paulsen I."/>
            <person name="Sachs M.S."/>
            <person name="Lander E.S."/>
            <person name="Nusbaum C."/>
            <person name="Birren B.W."/>
        </authorList>
    </citation>
    <scope>NUCLEOTIDE SEQUENCE [LARGE SCALE GENOMIC DNA]</scope>
    <source>
        <strain>ATCC 24698 / 74-OR23-1A / CBS 708.71 / DSM 1257 / FGSC 987</strain>
    </source>
</reference>
<feature type="chain" id="PRO_0000249704" description="Protein bcp-1">
    <location>
        <begin position="1"/>
        <end position="293"/>
    </location>
</feature>
<feature type="region of interest" description="Disordered" evidence="3">
    <location>
        <begin position="1"/>
        <end position="35"/>
    </location>
</feature>
<feature type="compositionally biased region" description="Basic and acidic residues" evidence="3">
    <location>
        <begin position="1"/>
        <end position="12"/>
    </location>
</feature>
<feature type="compositionally biased region" description="Acidic residues" evidence="3">
    <location>
        <begin position="24"/>
        <end position="35"/>
    </location>
</feature>
<comment type="function">
    <text evidence="1">Involved in nuclear export, actin cytoskeleton organization and vesicular transport.</text>
</comment>
<comment type="subcellular location">
    <subcellularLocation>
        <location evidence="2">Cytoplasm</location>
    </subcellularLocation>
    <subcellularLocation>
        <location evidence="2">Nucleus</location>
    </subcellularLocation>
</comment>
<comment type="similarity">
    <text evidence="4">Belongs to the BCP1 family.</text>
</comment>
<keyword id="KW-0963">Cytoplasm</keyword>
<keyword id="KW-0539">Nucleus</keyword>
<keyword id="KW-0653">Protein transport</keyword>
<keyword id="KW-1185">Reference proteome</keyword>
<keyword id="KW-0813">Transport</keyword>
<protein>
    <recommendedName>
        <fullName>Protein bcp-1</fullName>
    </recommendedName>
</protein>
<name>BCP1_NEUCR</name>
<gene>
    <name type="primary">bcp-1</name>
    <name type="ORF">NCU07726</name>
</gene>
<proteinExistence type="inferred from homology"/>